<dbReference type="EC" id="2.7.11.1"/>
<dbReference type="EMBL" id="X98374">
    <property type="protein sequence ID" value="CAA67021.1"/>
    <property type="molecule type" value="mRNA"/>
</dbReference>
<dbReference type="EMBL" id="U70372">
    <property type="protein sequence ID" value="AAC53031.2"/>
    <property type="molecule type" value="mRNA"/>
</dbReference>
<dbReference type="RefSeq" id="NP_058989.1">
    <property type="nucleotide sequence ID" value="NM_017293.2"/>
</dbReference>
<dbReference type="SMR" id="Q63285"/>
<dbReference type="BioGRID" id="251597">
    <property type="interactions" value="2"/>
</dbReference>
<dbReference type="FunCoup" id="Q63285">
    <property type="interactions" value="1299"/>
</dbReference>
<dbReference type="IntAct" id="Q63285">
    <property type="interactions" value="2"/>
</dbReference>
<dbReference type="STRING" id="10116.ENSRNOP00000069850"/>
<dbReference type="iPTMnet" id="Q63285"/>
<dbReference type="PhosphoSitePlus" id="Q63285"/>
<dbReference type="PaxDb" id="10116-ENSRNOP00000003950"/>
<dbReference type="Ensembl" id="ENSRNOT00000003950.5">
    <property type="protein sequence ID" value="ENSRNOP00000003950.3"/>
    <property type="gene ID" value="ENSRNOG00000002941.5"/>
</dbReference>
<dbReference type="GeneID" id="246332"/>
<dbReference type="KEGG" id="rno:246332"/>
<dbReference type="AGR" id="RGD:2968"/>
<dbReference type="CTD" id="127933"/>
<dbReference type="RGD" id="2968">
    <property type="gene designation" value="Uhmk1"/>
</dbReference>
<dbReference type="eggNOG" id="KOG0032">
    <property type="taxonomic scope" value="Eukaryota"/>
</dbReference>
<dbReference type="InParanoid" id="Q63285"/>
<dbReference type="OMA" id="VMATFYP"/>
<dbReference type="OrthoDB" id="10266058at2759"/>
<dbReference type="PhylomeDB" id="Q63285"/>
<dbReference type="TreeFam" id="TF331856"/>
<dbReference type="BRENDA" id="2.7.11.1">
    <property type="organism ID" value="5301"/>
</dbReference>
<dbReference type="Reactome" id="R-RNO-9634638">
    <property type="pathway name" value="Estrogen-dependent nuclear events downstream of ESR-membrane signaling"/>
</dbReference>
<dbReference type="PRO" id="PR:Q63285"/>
<dbReference type="Proteomes" id="UP000002494">
    <property type="component" value="Chromosome 13"/>
</dbReference>
<dbReference type="GO" id="GO:0030424">
    <property type="term" value="C:axon"/>
    <property type="evidence" value="ECO:0000266"/>
    <property type="project" value="RGD"/>
</dbReference>
<dbReference type="GO" id="GO:0005737">
    <property type="term" value="C:cytoplasm"/>
    <property type="evidence" value="ECO:0000314"/>
    <property type="project" value="UniProtKB"/>
</dbReference>
<dbReference type="GO" id="GO:0032839">
    <property type="term" value="C:dendrite cytoplasm"/>
    <property type="evidence" value="ECO:0000266"/>
    <property type="project" value="RGD"/>
</dbReference>
<dbReference type="GO" id="GO:0071598">
    <property type="term" value="C:neuronal ribonucleoprotein granule"/>
    <property type="evidence" value="ECO:0000266"/>
    <property type="project" value="RGD"/>
</dbReference>
<dbReference type="GO" id="GO:0005634">
    <property type="term" value="C:nucleus"/>
    <property type="evidence" value="ECO:0000314"/>
    <property type="project" value="UniProtKB"/>
</dbReference>
<dbReference type="GO" id="GO:0005524">
    <property type="term" value="F:ATP binding"/>
    <property type="evidence" value="ECO:0000305"/>
    <property type="project" value="UniProtKB"/>
</dbReference>
<dbReference type="GO" id="GO:0019899">
    <property type="term" value="F:enzyme binding"/>
    <property type="evidence" value="ECO:0000353"/>
    <property type="project" value="RGD"/>
</dbReference>
<dbReference type="GO" id="GO:0106310">
    <property type="term" value="F:protein serine kinase activity"/>
    <property type="evidence" value="ECO:0007669"/>
    <property type="project" value="RHEA"/>
</dbReference>
<dbReference type="GO" id="GO:0004674">
    <property type="term" value="F:protein serine/threonine kinase activity"/>
    <property type="evidence" value="ECO:0000314"/>
    <property type="project" value="UniProtKB"/>
</dbReference>
<dbReference type="GO" id="GO:0043021">
    <property type="term" value="F:ribonucleoprotein complex binding"/>
    <property type="evidence" value="ECO:0000266"/>
    <property type="project" value="RGD"/>
</dbReference>
<dbReference type="GO" id="GO:0003723">
    <property type="term" value="F:RNA binding"/>
    <property type="evidence" value="ECO:0000303"/>
    <property type="project" value="UniProtKB"/>
</dbReference>
<dbReference type="GO" id="GO:1990935">
    <property type="term" value="F:splicing factor binding"/>
    <property type="evidence" value="ECO:0000353"/>
    <property type="project" value="RGD"/>
</dbReference>
<dbReference type="GO" id="GO:0031175">
    <property type="term" value="P:neuron projection development"/>
    <property type="evidence" value="ECO:0000266"/>
    <property type="project" value="RGD"/>
</dbReference>
<dbReference type="GO" id="GO:0018105">
    <property type="term" value="P:peptidyl-serine phosphorylation"/>
    <property type="evidence" value="ECO:0000314"/>
    <property type="project" value="UniProtKB"/>
</dbReference>
<dbReference type="GO" id="GO:0045948">
    <property type="term" value="P:positive regulation of translational initiation"/>
    <property type="evidence" value="ECO:0000266"/>
    <property type="project" value="RGD"/>
</dbReference>
<dbReference type="GO" id="GO:0051726">
    <property type="term" value="P:regulation of cell cycle"/>
    <property type="evidence" value="ECO:0000266"/>
    <property type="project" value="RGD"/>
</dbReference>
<dbReference type="GO" id="GO:0046825">
    <property type="term" value="P:regulation of protein export from nucleus"/>
    <property type="evidence" value="ECO:0000266"/>
    <property type="project" value="RGD"/>
</dbReference>
<dbReference type="CDD" id="cd12465">
    <property type="entry name" value="RRM_UHMK1"/>
    <property type="match status" value="1"/>
</dbReference>
<dbReference type="CDD" id="cd14020">
    <property type="entry name" value="STKc_KIS"/>
    <property type="match status" value="1"/>
</dbReference>
<dbReference type="FunFam" id="1.10.510.10:FF:000322">
    <property type="entry name" value="Serine/threonine-protein kinase Kist isoform 1"/>
    <property type="match status" value="1"/>
</dbReference>
<dbReference type="FunFam" id="3.30.200.20:FF:000324">
    <property type="entry name" value="Serine/threonine-protein kinase Kist isoform 1"/>
    <property type="match status" value="1"/>
</dbReference>
<dbReference type="FunFam" id="3.30.70.330:FF:000241">
    <property type="entry name" value="Serine/threonine-protein kinase Kist isoform 1"/>
    <property type="match status" value="1"/>
</dbReference>
<dbReference type="Gene3D" id="3.30.70.330">
    <property type="match status" value="1"/>
</dbReference>
<dbReference type="Gene3D" id="3.30.200.20">
    <property type="entry name" value="Phosphorylase Kinase, domain 1"/>
    <property type="match status" value="1"/>
</dbReference>
<dbReference type="Gene3D" id="1.10.510.10">
    <property type="entry name" value="Transferase(Phosphotransferase) domain 1"/>
    <property type="match status" value="1"/>
</dbReference>
<dbReference type="InterPro" id="IPR011009">
    <property type="entry name" value="Kinase-like_dom_sf"/>
</dbReference>
<dbReference type="InterPro" id="IPR012677">
    <property type="entry name" value="Nucleotide-bd_a/b_plait_sf"/>
</dbReference>
<dbReference type="InterPro" id="IPR000719">
    <property type="entry name" value="Prot_kinase_dom"/>
</dbReference>
<dbReference type="InterPro" id="IPR035979">
    <property type="entry name" value="RBD_domain_sf"/>
</dbReference>
<dbReference type="InterPro" id="IPR000504">
    <property type="entry name" value="RRM_dom"/>
</dbReference>
<dbReference type="InterPro" id="IPR034372">
    <property type="entry name" value="UHMK1"/>
</dbReference>
<dbReference type="InterPro" id="IPR034371">
    <property type="entry name" value="UHMK1_RRM"/>
</dbReference>
<dbReference type="PANTHER" id="PTHR46962">
    <property type="entry name" value="SERINE/THREONINE-PROTEIN KINASE KIST"/>
    <property type="match status" value="1"/>
</dbReference>
<dbReference type="PANTHER" id="PTHR46962:SF1">
    <property type="entry name" value="SERINE_THREONINE-PROTEIN KINASE KIST"/>
    <property type="match status" value="1"/>
</dbReference>
<dbReference type="Pfam" id="PF00069">
    <property type="entry name" value="Pkinase"/>
    <property type="match status" value="1"/>
</dbReference>
<dbReference type="Pfam" id="PF00076">
    <property type="entry name" value="RRM_1"/>
    <property type="match status" value="1"/>
</dbReference>
<dbReference type="SMART" id="SM00360">
    <property type="entry name" value="RRM"/>
    <property type="match status" value="1"/>
</dbReference>
<dbReference type="SMART" id="SM00220">
    <property type="entry name" value="S_TKc"/>
    <property type="match status" value="1"/>
</dbReference>
<dbReference type="SUPFAM" id="SSF56112">
    <property type="entry name" value="Protein kinase-like (PK-like)"/>
    <property type="match status" value="1"/>
</dbReference>
<dbReference type="SUPFAM" id="SSF54928">
    <property type="entry name" value="RNA-binding domain, RBD"/>
    <property type="match status" value="1"/>
</dbReference>
<dbReference type="PROSITE" id="PS50011">
    <property type="entry name" value="PROTEIN_KINASE_DOM"/>
    <property type="match status" value="1"/>
</dbReference>
<dbReference type="PROSITE" id="PS50102">
    <property type="entry name" value="RRM"/>
    <property type="match status" value="1"/>
</dbReference>
<comment type="function">
    <text evidence="1 5">Upon serum stimulation, phosphorylates CDKN1B/p27Kip1, thus controlling CDKN1B subcellular location and cell cycle progression in G1 phase. May be involved in trafficking and/or processing of RNA (By similarity).</text>
</comment>
<comment type="catalytic activity">
    <reaction evidence="6">
        <text>L-seryl-[protein] + ATP = O-phospho-L-seryl-[protein] + ADP + H(+)</text>
        <dbReference type="Rhea" id="RHEA:17989"/>
        <dbReference type="Rhea" id="RHEA-COMP:9863"/>
        <dbReference type="Rhea" id="RHEA-COMP:11604"/>
        <dbReference type="ChEBI" id="CHEBI:15378"/>
        <dbReference type="ChEBI" id="CHEBI:29999"/>
        <dbReference type="ChEBI" id="CHEBI:30616"/>
        <dbReference type="ChEBI" id="CHEBI:83421"/>
        <dbReference type="ChEBI" id="CHEBI:456216"/>
        <dbReference type="EC" id="2.7.11.1"/>
    </reaction>
</comment>
<comment type="catalytic activity">
    <reaction evidence="6">
        <text>L-threonyl-[protein] + ATP = O-phospho-L-threonyl-[protein] + ADP + H(+)</text>
        <dbReference type="Rhea" id="RHEA:46608"/>
        <dbReference type="Rhea" id="RHEA-COMP:11060"/>
        <dbReference type="Rhea" id="RHEA-COMP:11605"/>
        <dbReference type="ChEBI" id="CHEBI:15378"/>
        <dbReference type="ChEBI" id="CHEBI:30013"/>
        <dbReference type="ChEBI" id="CHEBI:30616"/>
        <dbReference type="ChEBI" id="CHEBI:61977"/>
        <dbReference type="ChEBI" id="CHEBI:456216"/>
        <dbReference type="EC" id="2.7.11.1"/>
    </reaction>
</comment>
<comment type="subunit">
    <text evidence="1 4 5">Interacts with stathmin and CDKN1B/p27Kip1 (By similarity) Interacts with PAM.</text>
</comment>
<comment type="subcellular location">
    <subcellularLocation>
        <location evidence="5">Cytoplasm</location>
    </subcellularLocation>
    <subcellularLocation>
        <location evidence="5">Nucleus</location>
    </subcellularLocation>
</comment>
<comment type="tissue specificity">
    <text evidence="5">In the embryo, preferentially expressed in the developing nervous system.</text>
</comment>
<comment type="similarity">
    <text evidence="2">Belongs to the protein kinase superfamily. Ser/Thr protein kinase family.</text>
</comment>
<name>UHMK1_RAT</name>
<organism>
    <name type="scientific">Rattus norvegicus</name>
    <name type="common">Rat</name>
    <dbReference type="NCBI Taxonomy" id="10116"/>
    <lineage>
        <taxon>Eukaryota</taxon>
        <taxon>Metazoa</taxon>
        <taxon>Chordata</taxon>
        <taxon>Craniata</taxon>
        <taxon>Vertebrata</taxon>
        <taxon>Euteleostomi</taxon>
        <taxon>Mammalia</taxon>
        <taxon>Eutheria</taxon>
        <taxon>Euarchontoglires</taxon>
        <taxon>Glires</taxon>
        <taxon>Rodentia</taxon>
        <taxon>Myomorpha</taxon>
        <taxon>Muroidea</taxon>
        <taxon>Muridae</taxon>
        <taxon>Murinae</taxon>
        <taxon>Rattus</taxon>
    </lineage>
</organism>
<keyword id="KW-0067">ATP-binding</keyword>
<keyword id="KW-0963">Cytoplasm</keyword>
<keyword id="KW-0418">Kinase</keyword>
<keyword id="KW-0547">Nucleotide-binding</keyword>
<keyword id="KW-0539">Nucleus</keyword>
<keyword id="KW-1185">Reference proteome</keyword>
<keyword id="KW-0694">RNA-binding</keyword>
<keyword id="KW-0723">Serine/threonine-protein kinase</keyword>
<keyword id="KW-0808">Transferase</keyword>
<evidence type="ECO:0000250" key="1"/>
<evidence type="ECO:0000255" key="2">
    <source>
        <dbReference type="PROSITE-ProRule" id="PRU00159"/>
    </source>
</evidence>
<evidence type="ECO:0000255" key="3">
    <source>
        <dbReference type="PROSITE-ProRule" id="PRU00176"/>
    </source>
</evidence>
<evidence type="ECO:0000269" key="4">
    <source>
    </source>
</evidence>
<evidence type="ECO:0000269" key="5">
    <source>
    </source>
</evidence>
<evidence type="ECO:0000305" key="6"/>
<gene>
    <name type="primary">Uhmk1</name>
    <name type="synonym">Kis</name>
    <name type="synonym">Kist</name>
</gene>
<reference evidence="6" key="1">
    <citation type="journal article" date="1997" name="J. Biol. Chem.">
        <title>KIS is a protein kinase with an RNA recognition motif.</title>
        <authorList>
            <person name="Maucuer A."/>
            <person name="Ozon S."/>
            <person name="Manceau V."/>
            <person name="Gavet O."/>
            <person name="Lawler S."/>
            <person name="Curmi P."/>
            <person name="Sobel A."/>
        </authorList>
    </citation>
    <scope>NUCLEOTIDE SEQUENCE [MRNA]</scope>
    <scope>FUNCTION</scope>
    <scope>SUBUNIT</scope>
    <scope>SUBCELLULAR LOCATION</scope>
    <scope>TISSUE SPECIFICITY</scope>
    <scope>MUTAGENESIS OF LYS-54</scope>
    <source>
        <tissue>Corpus striatum</tissue>
    </source>
</reference>
<reference key="2">
    <citation type="submission" date="1999-09" db="EMBL/GenBank/DDBJ databases">
        <authorList>
            <person name="Caldwell B.D."/>
            <person name="Darlington D.N."/>
            <person name="Penzes P."/>
            <person name="Johnson R.C."/>
            <person name="Eipper B.A."/>
            <person name="Mains R.E."/>
        </authorList>
    </citation>
    <scope>NUCLEOTIDE SEQUENCE [MRNA]</scope>
</reference>
<reference evidence="6" key="3">
    <citation type="journal article" date="1996" name="J. Biol. Chem.">
        <title>Novel proteins that interact with the COOH-terminal cytosolic routing determinants of an integral membrane peptide-processing enzyme.</title>
        <authorList>
            <person name="Alam M.R."/>
            <person name="Caldwell B.D."/>
            <person name="Johnson R.C."/>
            <person name="Darlington D.N."/>
            <person name="Mains R.E."/>
            <person name="Eipper B.A."/>
        </authorList>
    </citation>
    <scope>NUCLEOTIDE SEQUENCE [MRNA] OF 28-419</scope>
    <scope>INTERACTION WITH PAM</scope>
    <source>
        <tissue>Hippocampus</tissue>
    </source>
</reference>
<feature type="chain" id="PRO_0000086779" description="Serine/threonine-protein kinase Kist">
    <location>
        <begin position="1"/>
        <end position="419"/>
    </location>
</feature>
<feature type="domain" description="Protein kinase" evidence="2">
    <location>
        <begin position="23"/>
        <end position="304"/>
    </location>
</feature>
<feature type="domain" description="RRM" evidence="3">
    <location>
        <begin position="324"/>
        <end position="406"/>
    </location>
</feature>
<feature type="active site" description="Proton acceptor" evidence="2">
    <location>
        <position position="141"/>
    </location>
</feature>
<feature type="active site" description="Proton acceptor" evidence="2">
    <location>
        <position position="158"/>
    </location>
</feature>
<feature type="binding site" evidence="2">
    <location>
        <begin position="29"/>
        <end position="37"/>
    </location>
    <ligand>
        <name>ATP</name>
        <dbReference type="ChEBI" id="CHEBI:30616"/>
    </ligand>
</feature>
<feature type="binding site">
    <location>
        <position position="54"/>
    </location>
    <ligand>
        <name>ATP</name>
        <dbReference type="ChEBI" id="CHEBI:30616"/>
    </ligand>
</feature>
<feature type="mutagenesis site" description="Loss of activity." evidence="5">
    <original>K</original>
    <variation>R</variation>
    <location>
        <position position="54"/>
    </location>
</feature>
<proteinExistence type="evidence at protein level"/>
<protein>
    <recommendedName>
        <fullName>Serine/threonine-protein kinase Kist</fullName>
        <ecNumber>2.7.11.1</ecNumber>
    </recommendedName>
    <alternativeName>
        <fullName>Kinase interacting with stathmin</fullName>
    </alternativeName>
    <alternativeName>
        <fullName>PAM COOH-terminal interactor protein 2</fullName>
        <shortName>P-CIP2</shortName>
    </alternativeName>
    <alternativeName>
        <fullName>U2AF homology motif kinase 1</fullName>
    </alternativeName>
</protein>
<accession>Q63285</accession>
<sequence>MAGSGCAWGAEPPRFLEAFGRLWQVQSRLGSGSSASVYRVRCCGTPGSPPGALKQFLPPGTTGAAASAAEYGFRKERAALEQLQGHRNIVTLYGVFTIHFSPNVPSRCLLLELLDVSVSELLVYSSHQGCSMWMIQHCARDVLEALAFLHHEGYVHADLKPRNILWSAENECFKLIDFGLSFKEGNQDVKYIQTDGYRAPEAELQNCLAQAGLQSDTECTSAVDLWSLGIILLEMFSGMKLKHTVRSQEWKANSSAIIDHIFASKAVVNAAIPAYHLRDLIKSMLHDDPSRRIPAEMALCSPFFSIPFAPHIEDLVMLPTPVLRLLNVLDDDYLENEDEYEDVVEDVKEECQKYGPVVSLLVPKENPGRGQVFVEYANAGDSKAAQKLLTGRMFDGKFVVATFYPLSAYKRGYLYQTLL</sequence>